<comment type="function">
    <text evidence="1">Activates an alternative mTOR signaling to regulate cell proliferation and migration.</text>
</comment>
<comment type="subcellular location">
    <subcellularLocation>
        <location evidence="1">Membrane</location>
    </subcellularLocation>
    <subcellularLocation>
        <location evidence="1">Cytoplasm</location>
    </subcellularLocation>
    <subcellularLocation>
        <location evidence="1">Lysosome</location>
    </subcellularLocation>
</comment>
<evidence type="ECO:0000250" key="1">
    <source>
        <dbReference type="UniProtKB" id="Q6P9B6"/>
    </source>
</evidence>
<evidence type="ECO:0000255" key="2">
    <source>
        <dbReference type="PROSITE-ProRule" id="PRU01234"/>
    </source>
</evidence>
<evidence type="ECO:0000305" key="3"/>
<gene>
    <name type="primary">meak7</name>
    <name type="synonym">KIAA1609</name>
    <name type="synonym">tldc1</name>
</gene>
<sequence>MGNTESGSHQKGLSRILPEEKAEIEQFFENMCRMQSGPKKSVGLQYFQDALRNSLPCSISQRIFDGIQSVRTNSKSSTMSAEISKEQFLVFYVDLLRGTAEEKSQVICDMISCNNSEHMKGHQVQKFLEDIIAAVIYVLKQQSLLKGWNLENMRDCTLGTQGLAMQLLSQLQSIDGQKFERQELLDSPCSKSCIEDWLYKIPMISLFVRVMLTVGLSILKHHTEHQKDMKTLLPKCTGMKNTSFVSLLDLPAVMHLNYYLPYEVQHKWRLLFSSQIHGESFSQLCGHILDQGPCLLIVKDSDGFVFGGFASQSWKVKPQFQGDSRCFLFSISPRLDVYTYTGYNDHYMYLNRAQQSLPNGLGMGGQHEYFGFWIDSNFGIGHSKAKPSCTTYNSPQLSAKEEFSIHTVEVWAVGDVPEHLLAKNPRSILDSDTEARALLEMAGQTRQSDGLREVTEEDES</sequence>
<name>MEAK7_XENLA</name>
<accession>Q6DDZ9</accession>
<feature type="chain" id="PRO_0000313644" description="MTOR-associated protein MEAK7">
    <location>
        <begin position="1"/>
        <end position="460"/>
    </location>
</feature>
<feature type="domain" description="TLDc" evidence="2">
    <location>
        <begin position="246"/>
        <end position="414"/>
    </location>
</feature>
<organism>
    <name type="scientific">Xenopus laevis</name>
    <name type="common">African clawed frog</name>
    <dbReference type="NCBI Taxonomy" id="8355"/>
    <lineage>
        <taxon>Eukaryota</taxon>
        <taxon>Metazoa</taxon>
        <taxon>Chordata</taxon>
        <taxon>Craniata</taxon>
        <taxon>Vertebrata</taxon>
        <taxon>Euteleostomi</taxon>
        <taxon>Amphibia</taxon>
        <taxon>Batrachia</taxon>
        <taxon>Anura</taxon>
        <taxon>Pipoidea</taxon>
        <taxon>Pipidae</taxon>
        <taxon>Xenopodinae</taxon>
        <taxon>Xenopus</taxon>
        <taxon>Xenopus</taxon>
    </lineage>
</organism>
<dbReference type="EMBL" id="BC077349">
    <property type="protein sequence ID" value="AAH77349.1"/>
    <property type="molecule type" value="mRNA"/>
</dbReference>
<dbReference type="RefSeq" id="NP_001086719.1">
    <property type="nucleotide sequence ID" value="NM_001093250.1"/>
</dbReference>
<dbReference type="SMR" id="Q6DDZ9"/>
<dbReference type="DNASU" id="446554"/>
<dbReference type="GeneID" id="446554"/>
<dbReference type="KEGG" id="xla:446554"/>
<dbReference type="AGR" id="Xenbase:XB-GENE-5927060"/>
<dbReference type="CTD" id="446554"/>
<dbReference type="Xenbase" id="XB-GENE-5927060">
    <property type="gene designation" value="meak7.L"/>
</dbReference>
<dbReference type="OMA" id="NKGPCIV"/>
<dbReference type="OrthoDB" id="289228at2759"/>
<dbReference type="Proteomes" id="UP000186698">
    <property type="component" value="Chromosome 4L"/>
</dbReference>
<dbReference type="Bgee" id="446554">
    <property type="expression patterns" value="Expressed in testis and 19 other cell types or tissues"/>
</dbReference>
<dbReference type="GO" id="GO:0005737">
    <property type="term" value="C:cytoplasm"/>
    <property type="evidence" value="ECO:0000250"/>
    <property type="project" value="UniProtKB"/>
</dbReference>
<dbReference type="GO" id="GO:0005765">
    <property type="term" value="C:lysosomal membrane"/>
    <property type="evidence" value="ECO:0000250"/>
    <property type="project" value="UniProtKB"/>
</dbReference>
<dbReference type="GO" id="GO:0016020">
    <property type="term" value="C:membrane"/>
    <property type="evidence" value="ECO:0000250"/>
    <property type="project" value="UniProtKB"/>
</dbReference>
<dbReference type="GO" id="GO:0005634">
    <property type="term" value="C:nucleus"/>
    <property type="evidence" value="ECO:0000318"/>
    <property type="project" value="GO_Central"/>
</dbReference>
<dbReference type="GO" id="GO:0150032">
    <property type="term" value="P:positive regulation of protein localization to lysosome"/>
    <property type="evidence" value="ECO:0000250"/>
    <property type="project" value="UniProtKB"/>
</dbReference>
<dbReference type="GO" id="GO:0030334">
    <property type="term" value="P:regulation of cell migration"/>
    <property type="evidence" value="ECO:0000250"/>
    <property type="project" value="UniProtKB"/>
</dbReference>
<dbReference type="GO" id="GO:0042127">
    <property type="term" value="P:regulation of cell population proliferation"/>
    <property type="evidence" value="ECO:0000250"/>
    <property type="project" value="UniProtKB"/>
</dbReference>
<dbReference type="GO" id="GO:0043200">
    <property type="term" value="P:response to amino acid"/>
    <property type="evidence" value="ECO:0000250"/>
    <property type="project" value="UniProtKB"/>
</dbReference>
<dbReference type="GO" id="GO:0032868">
    <property type="term" value="P:response to insulin"/>
    <property type="evidence" value="ECO:0000250"/>
    <property type="project" value="UniProtKB"/>
</dbReference>
<dbReference type="GO" id="GO:0031667">
    <property type="term" value="P:response to nutrient levels"/>
    <property type="evidence" value="ECO:0000250"/>
    <property type="project" value="UniProtKB"/>
</dbReference>
<dbReference type="GO" id="GO:0006979">
    <property type="term" value="P:response to oxidative stress"/>
    <property type="evidence" value="ECO:0000318"/>
    <property type="project" value="GO_Central"/>
</dbReference>
<dbReference type="GO" id="GO:0031929">
    <property type="term" value="P:TOR signaling"/>
    <property type="evidence" value="ECO:0000250"/>
    <property type="project" value="UniProtKB"/>
</dbReference>
<dbReference type="InterPro" id="IPR006571">
    <property type="entry name" value="TLDc_dom"/>
</dbReference>
<dbReference type="PANTHER" id="PTHR23354:SF131">
    <property type="entry name" value="MTOR-ASSOCIATED PROTEIN MEAK7"/>
    <property type="match status" value="1"/>
</dbReference>
<dbReference type="PANTHER" id="PTHR23354">
    <property type="entry name" value="NUCLEOLAR PROTEIN 7/ESTROGEN RECEPTOR COACTIVATOR-RELATED"/>
    <property type="match status" value="1"/>
</dbReference>
<dbReference type="Pfam" id="PF07534">
    <property type="entry name" value="TLD"/>
    <property type="match status" value="1"/>
</dbReference>
<dbReference type="SMART" id="SM00584">
    <property type="entry name" value="TLDc"/>
    <property type="match status" value="1"/>
</dbReference>
<dbReference type="PROSITE" id="PS51886">
    <property type="entry name" value="TLDC"/>
    <property type="match status" value="1"/>
</dbReference>
<proteinExistence type="evidence at transcript level"/>
<reference key="1">
    <citation type="submission" date="2004-07" db="EMBL/GenBank/DDBJ databases">
        <authorList>
            <consortium name="NIH - Xenopus Gene Collection (XGC) project"/>
        </authorList>
    </citation>
    <scope>NUCLEOTIDE SEQUENCE [LARGE SCALE MRNA]</scope>
    <source>
        <tissue>Ovary</tissue>
    </source>
</reference>
<protein>
    <recommendedName>
        <fullName evidence="3">MTOR-associated protein MEAK7</fullName>
        <shortName evidence="3">MEAK7</shortName>
    </recommendedName>
    <alternativeName>
        <fullName>TBC/LysM-associated domain-containing protein 1</fullName>
    </alternativeName>
    <alternativeName>
        <fullName>TLD domain-containing protein 1</fullName>
    </alternativeName>
</protein>
<keyword id="KW-0963">Cytoplasm</keyword>
<keyword id="KW-0458">Lysosome</keyword>
<keyword id="KW-0472">Membrane</keyword>
<keyword id="KW-1185">Reference proteome</keyword>